<protein>
    <recommendedName>
        <fullName evidence="1">Ferredoxin--NADP reductase</fullName>
        <shortName evidence="1">FNR</shortName>
        <shortName evidence="1">Fd-NADP(+) reductase</shortName>
        <ecNumber evidence="1">1.18.1.2</ecNumber>
    </recommendedName>
</protein>
<reference key="1">
    <citation type="journal article" date="2006" name="Proc. Natl. Acad. Sci. U.S.A.">
        <title>Comparative genomics of the lactic acid bacteria.</title>
        <authorList>
            <person name="Makarova K.S."/>
            <person name="Slesarev A."/>
            <person name="Wolf Y.I."/>
            <person name="Sorokin A."/>
            <person name="Mirkin B."/>
            <person name="Koonin E.V."/>
            <person name="Pavlov A."/>
            <person name="Pavlova N."/>
            <person name="Karamychev V."/>
            <person name="Polouchine N."/>
            <person name="Shakhova V."/>
            <person name="Grigoriev I."/>
            <person name="Lou Y."/>
            <person name="Rohksar D."/>
            <person name="Lucas S."/>
            <person name="Huang K."/>
            <person name="Goodstein D.M."/>
            <person name="Hawkins T."/>
            <person name="Plengvidhya V."/>
            <person name="Welker D."/>
            <person name="Hughes J."/>
            <person name="Goh Y."/>
            <person name="Benson A."/>
            <person name="Baldwin K."/>
            <person name="Lee J.-H."/>
            <person name="Diaz-Muniz I."/>
            <person name="Dosti B."/>
            <person name="Smeianov V."/>
            <person name="Wechter W."/>
            <person name="Barabote R."/>
            <person name="Lorca G."/>
            <person name="Altermann E."/>
            <person name="Barrangou R."/>
            <person name="Ganesan B."/>
            <person name="Xie Y."/>
            <person name="Rawsthorne H."/>
            <person name="Tamir D."/>
            <person name="Parker C."/>
            <person name="Breidt F."/>
            <person name="Broadbent J.R."/>
            <person name="Hutkins R."/>
            <person name="O'Sullivan D."/>
            <person name="Steele J."/>
            <person name="Unlu G."/>
            <person name="Saier M.H. Jr."/>
            <person name="Klaenhammer T."/>
            <person name="Richardson P."/>
            <person name="Kozyavkin S."/>
            <person name="Weimer B.C."/>
            <person name="Mills D.A."/>
        </authorList>
    </citation>
    <scope>NUCLEOTIDE SEQUENCE [LARGE SCALE GENOMIC DNA]</scope>
    <source>
        <strain>SK11</strain>
    </source>
</reference>
<proteinExistence type="inferred from homology"/>
<sequence>MQELDLIIVGAGPVGLYAAFYAGMRGLSVAIIESAQVAGGQPQNLYPEKLIYDIAGLPAVTGADLTKNLLEQLAQISHRLFLGESVQKIEKEDGIFSVITDKSNRKAKAVLLTTGAGLLKPRKLGIDNEENLANEGKISYFITSLKEFEGKNVAVFGGGDSALDWSLMLEKVAKEVHLVHRRTAFRGHEMTVDRVMNSGIQVHTPYTFSNFNENDLELKKVKAEENLNFSIDKILVNYGFLTNQVSLAENLEVSRNGRVKADSMMQSNIEGLYVAGDASDYAGKMPLMSVGFGEAVHAINAMTKKLEFDHPLRGGHSSSIF</sequence>
<name>FENR_LACLS</name>
<comment type="catalytic activity">
    <reaction evidence="1">
        <text>2 reduced [2Fe-2S]-[ferredoxin] + NADP(+) + H(+) = 2 oxidized [2Fe-2S]-[ferredoxin] + NADPH</text>
        <dbReference type="Rhea" id="RHEA:20125"/>
        <dbReference type="Rhea" id="RHEA-COMP:10000"/>
        <dbReference type="Rhea" id="RHEA-COMP:10001"/>
        <dbReference type="ChEBI" id="CHEBI:15378"/>
        <dbReference type="ChEBI" id="CHEBI:33737"/>
        <dbReference type="ChEBI" id="CHEBI:33738"/>
        <dbReference type="ChEBI" id="CHEBI:57783"/>
        <dbReference type="ChEBI" id="CHEBI:58349"/>
        <dbReference type="EC" id="1.18.1.2"/>
    </reaction>
</comment>
<comment type="cofactor">
    <cofactor evidence="1">
        <name>FAD</name>
        <dbReference type="ChEBI" id="CHEBI:57692"/>
    </cofactor>
    <text evidence="1">Binds 1 FAD per subunit.</text>
</comment>
<comment type="subunit">
    <text evidence="1">Homodimer.</text>
</comment>
<comment type="similarity">
    <text evidence="1">Belongs to the ferredoxin--NADP reductase type 2 family.</text>
</comment>
<gene>
    <name type="ordered locus">LACR_1811</name>
</gene>
<accession>Q02XL9</accession>
<feature type="chain" id="PRO_0000364864" description="Ferredoxin--NADP reductase">
    <location>
        <begin position="1"/>
        <end position="321"/>
    </location>
</feature>
<feature type="binding site" evidence="1">
    <location>
        <position position="33"/>
    </location>
    <ligand>
        <name>FAD</name>
        <dbReference type="ChEBI" id="CHEBI:57692"/>
    </ligand>
</feature>
<feature type="binding site" evidence="1">
    <location>
        <position position="41"/>
    </location>
    <ligand>
        <name>FAD</name>
        <dbReference type="ChEBI" id="CHEBI:57692"/>
    </ligand>
</feature>
<feature type="binding site" evidence="1">
    <location>
        <position position="46"/>
    </location>
    <ligand>
        <name>FAD</name>
        <dbReference type="ChEBI" id="CHEBI:57692"/>
    </ligand>
</feature>
<feature type="binding site" evidence="1">
    <location>
        <position position="86"/>
    </location>
    <ligand>
        <name>FAD</name>
        <dbReference type="ChEBI" id="CHEBI:57692"/>
    </ligand>
</feature>
<feature type="binding site" evidence="1">
    <location>
        <position position="119"/>
    </location>
    <ligand>
        <name>FAD</name>
        <dbReference type="ChEBI" id="CHEBI:57692"/>
    </ligand>
</feature>
<feature type="binding site" evidence="1">
    <location>
        <position position="277"/>
    </location>
    <ligand>
        <name>FAD</name>
        <dbReference type="ChEBI" id="CHEBI:57692"/>
    </ligand>
</feature>
<feature type="binding site" evidence="1">
    <location>
        <position position="318"/>
    </location>
    <ligand>
        <name>FAD</name>
        <dbReference type="ChEBI" id="CHEBI:57692"/>
    </ligand>
</feature>
<dbReference type="EC" id="1.18.1.2" evidence="1"/>
<dbReference type="EMBL" id="CP000425">
    <property type="protein sequence ID" value="ABJ73303.1"/>
    <property type="molecule type" value="Genomic_DNA"/>
</dbReference>
<dbReference type="RefSeq" id="WP_011676551.1">
    <property type="nucleotide sequence ID" value="NC_008527.1"/>
</dbReference>
<dbReference type="SMR" id="Q02XL9"/>
<dbReference type="KEGG" id="llc:LACR_1811"/>
<dbReference type="HOGENOM" id="CLU_031864_5_5_9"/>
<dbReference type="Proteomes" id="UP000000240">
    <property type="component" value="Chromosome"/>
</dbReference>
<dbReference type="GO" id="GO:0004324">
    <property type="term" value="F:ferredoxin-NADP+ reductase activity"/>
    <property type="evidence" value="ECO:0007669"/>
    <property type="project" value="UniProtKB-UniRule"/>
</dbReference>
<dbReference type="GO" id="GO:0050660">
    <property type="term" value="F:flavin adenine dinucleotide binding"/>
    <property type="evidence" value="ECO:0007669"/>
    <property type="project" value="UniProtKB-UniRule"/>
</dbReference>
<dbReference type="GO" id="GO:0050661">
    <property type="term" value="F:NADP binding"/>
    <property type="evidence" value="ECO:0007669"/>
    <property type="project" value="UniProtKB-UniRule"/>
</dbReference>
<dbReference type="Gene3D" id="3.50.50.60">
    <property type="entry name" value="FAD/NAD(P)-binding domain"/>
    <property type="match status" value="2"/>
</dbReference>
<dbReference type="HAMAP" id="MF_01685">
    <property type="entry name" value="FENR2"/>
    <property type="match status" value="1"/>
</dbReference>
<dbReference type="InterPro" id="IPR036188">
    <property type="entry name" value="FAD/NAD-bd_sf"/>
</dbReference>
<dbReference type="InterPro" id="IPR023753">
    <property type="entry name" value="FAD/NAD-binding_dom"/>
</dbReference>
<dbReference type="InterPro" id="IPR022890">
    <property type="entry name" value="Fd--NADP_Rdtase_type_2"/>
</dbReference>
<dbReference type="InterPro" id="IPR050097">
    <property type="entry name" value="Ferredoxin-NADP_redctase_2"/>
</dbReference>
<dbReference type="PANTHER" id="PTHR48105">
    <property type="entry name" value="THIOREDOXIN REDUCTASE 1-RELATED-RELATED"/>
    <property type="match status" value="1"/>
</dbReference>
<dbReference type="Pfam" id="PF07992">
    <property type="entry name" value="Pyr_redox_2"/>
    <property type="match status" value="1"/>
</dbReference>
<dbReference type="PRINTS" id="PR00368">
    <property type="entry name" value="FADPNR"/>
</dbReference>
<dbReference type="PRINTS" id="PR00469">
    <property type="entry name" value="PNDRDTASEII"/>
</dbReference>
<dbReference type="SUPFAM" id="SSF51905">
    <property type="entry name" value="FAD/NAD(P)-binding domain"/>
    <property type="match status" value="1"/>
</dbReference>
<keyword id="KW-0274">FAD</keyword>
<keyword id="KW-0285">Flavoprotein</keyword>
<keyword id="KW-0521">NADP</keyword>
<keyword id="KW-0560">Oxidoreductase</keyword>
<organism>
    <name type="scientific">Lactococcus lactis subsp. cremoris (strain SK11)</name>
    <dbReference type="NCBI Taxonomy" id="272622"/>
    <lineage>
        <taxon>Bacteria</taxon>
        <taxon>Bacillati</taxon>
        <taxon>Bacillota</taxon>
        <taxon>Bacilli</taxon>
        <taxon>Lactobacillales</taxon>
        <taxon>Streptococcaceae</taxon>
        <taxon>Lactococcus</taxon>
        <taxon>Lactococcus cremoris subsp. cremoris</taxon>
    </lineage>
</organism>
<evidence type="ECO:0000255" key="1">
    <source>
        <dbReference type="HAMAP-Rule" id="MF_01685"/>
    </source>
</evidence>